<keyword id="KW-0928">Hypersensitive response elicitation</keyword>
<name>HRMA_PSESY</name>
<proteinExistence type="predicted"/>
<comment type="function">
    <text>Unknown. May serve a regulatory function.</text>
</comment>
<feature type="chain" id="PRO_0000084064" description="Protein HrmA">
    <location>
        <begin position="1"/>
        <end position="375"/>
    </location>
</feature>
<accession>Q08370</accession>
<sequence>MNPIHARFSSVEALRHSNVDIQAIKSEGQLEVNGKRYEIRAAADGSIAVLRPDQQSKADKFFKGAAHLIGGQSQRAQIAQVLNEKAAAVPRLDRMLGRRFDLEKGGSSAVGAAIKAADSRLTSKQTFASFQQWAEKAEALGRYRNRYLHDLQEGHARHNAYECGRVKNITWKRYRLSITRKTLSYAPQIHDDREEEELDLGRYIAEDRNARTGFFRMVPKDQRAPETNSGRLTIGVEPKYGAQLALAMATLMDKHKSVTQGKVVGPAKYGQQTDSAILYINGDLAKAVKLGEKLKKLSGIPPEGFVEHTPLSMQSTGLGLSYAESVEGQPSSHGQARTHVIMDALKGQGPMENRLKMALAERGYDPENPALRARN</sequence>
<reference key="1">
    <citation type="journal article" date="1991" name="Mol. Plant Microbe Interact.">
        <title>Characterization of the hrp cluster from Pseudomonas syringae pv. syringae 61 and TnphoA tagging of exported or membrane-spanning Hrp proteins.</title>
        <authorList>
            <person name="Huang H.C."/>
            <person name="Hutcheson S.W."/>
            <person name="Collmer A."/>
        </authorList>
    </citation>
    <scope>NUCLEOTIDE SEQUENCE [GENOMIC DNA]</scope>
    <source>
        <strain>Pss61</strain>
    </source>
</reference>
<reference key="2">
    <citation type="journal article" date="1993" name="Mol. Plant Microbe Interact.">
        <title>Nucleotide sequence and properties of the hrmA locus associated with the Pseudomonas syringae pv. syringae 61 hrp gene cluster.</title>
        <authorList>
            <person name="Heu S."/>
            <person name="Hutcheson S.W."/>
        </authorList>
    </citation>
    <scope>NUCLEOTIDE SEQUENCE [GENOMIC DNA]</scope>
    <source>
        <strain>Pss61</strain>
    </source>
</reference>
<organism>
    <name type="scientific">Pseudomonas syringae pv. syringae</name>
    <dbReference type="NCBI Taxonomy" id="321"/>
    <lineage>
        <taxon>Bacteria</taxon>
        <taxon>Pseudomonadati</taxon>
        <taxon>Pseudomonadota</taxon>
        <taxon>Gammaproteobacteria</taxon>
        <taxon>Pseudomonadales</taxon>
        <taxon>Pseudomonadaceae</taxon>
        <taxon>Pseudomonas</taxon>
        <taxon>Pseudomonas syringae</taxon>
    </lineage>
</organism>
<gene>
    <name type="primary">hrmA</name>
</gene>
<protein>
    <recommendedName>
        <fullName>Protein HrmA</fullName>
    </recommendedName>
</protein>
<dbReference type="EMBL" id="L14926">
    <property type="protein sequence ID" value="AAA16545.1"/>
    <property type="molecule type" value="Unassigned_DNA"/>
</dbReference>
<dbReference type="SMR" id="Q08370"/>
<dbReference type="PHI-base" id="PHI:980"/>
<dbReference type="GO" id="GO:0052040">
    <property type="term" value="P:symbiont-mediated perturbation of host programmed cell death"/>
    <property type="evidence" value="ECO:0007669"/>
    <property type="project" value="UniProtKB-KW"/>
</dbReference>
<dbReference type="Gene3D" id="6.10.20.120">
    <property type="match status" value="1"/>
</dbReference>
<dbReference type="InterPro" id="IPR040871">
    <property type="entry name" value="HopA1"/>
</dbReference>
<dbReference type="Pfam" id="PF17914">
    <property type="entry name" value="HopA1"/>
    <property type="match status" value="1"/>
</dbReference>